<reference key="1">
    <citation type="journal article" date="2004" name="Nature">
        <title>Genome evolution in yeasts.</title>
        <authorList>
            <person name="Dujon B."/>
            <person name="Sherman D."/>
            <person name="Fischer G."/>
            <person name="Durrens P."/>
            <person name="Casaregola S."/>
            <person name="Lafontaine I."/>
            <person name="de Montigny J."/>
            <person name="Marck C."/>
            <person name="Neuveglise C."/>
            <person name="Talla E."/>
            <person name="Goffard N."/>
            <person name="Frangeul L."/>
            <person name="Aigle M."/>
            <person name="Anthouard V."/>
            <person name="Babour A."/>
            <person name="Barbe V."/>
            <person name="Barnay S."/>
            <person name="Blanchin S."/>
            <person name="Beckerich J.-M."/>
            <person name="Beyne E."/>
            <person name="Bleykasten C."/>
            <person name="Boisrame A."/>
            <person name="Boyer J."/>
            <person name="Cattolico L."/>
            <person name="Confanioleri F."/>
            <person name="de Daruvar A."/>
            <person name="Despons L."/>
            <person name="Fabre E."/>
            <person name="Fairhead C."/>
            <person name="Ferry-Dumazet H."/>
            <person name="Groppi A."/>
            <person name="Hantraye F."/>
            <person name="Hennequin C."/>
            <person name="Jauniaux N."/>
            <person name="Joyet P."/>
            <person name="Kachouri R."/>
            <person name="Kerrest A."/>
            <person name="Koszul R."/>
            <person name="Lemaire M."/>
            <person name="Lesur I."/>
            <person name="Ma L."/>
            <person name="Muller H."/>
            <person name="Nicaud J.-M."/>
            <person name="Nikolski M."/>
            <person name="Oztas S."/>
            <person name="Ozier-Kalogeropoulos O."/>
            <person name="Pellenz S."/>
            <person name="Potier S."/>
            <person name="Richard G.-F."/>
            <person name="Straub M.-L."/>
            <person name="Suleau A."/>
            <person name="Swennen D."/>
            <person name="Tekaia F."/>
            <person name="Wesolowski-Louvel M."/>
            <person name="Westhof E."/>
            <person name="Wirth B."/>
            <person name="Zeniou-Meyer M."/>
            <person name="Zivanovic Y."/>
            <person name="Bolotin-Fukuhara M."/>
            <person name="Thierry A."/>
            <person name="Bouchier C."/>
            <person name="Caudron B."/>
            <person name="Scarpelli C."/>
            <person name="Gaillardin C."/>
            <person name="Weissenbach J."/>
            <person name="Wincker P."/>
            <person name="Souciet J.-L."/>
        </authorList>
    </citation>
    <scope>NUCLEOTIDE SEQUENCE [LARGE SCALE GENOMIC DNA]</scope>
    <source>
        <strain>ATCC 36239 / CBS 767 / BCRC 21394 / JCM 1990 / NBRC 0083 / IGC 2968</strain>
    </source>
</reference>
<proteinExistence type="inferred from homology"/>
<organism>
    <name type="scientific">Debaryomyces hansenii (strain ATCC 36239 / CBS 767 / BCRC 21394 / JCM 1990 / NBRC 0083 / IGC 2968)</name>
    <name type="common">Yeast</name>
    <name type="synonym">Torulaspora hansenii</name>
    <dbReference type="NCBI Taxonomy" id="284592"/>
    <lineage>
        <taxon>Eukaryota</taxon>
        <taxon>Fungi</taxon>
        <taxon>Dikarya</taxon>
        <taxon>Ascomycota</taxon>
        <taxon>Saccharomycotina</taxon>
        <taxon>Pichiomycetes</taxon>
        <taxon>Debaryomycetaceae</taxon>
        <taxon>Debaryomyces</taxon>
    </lineage>
</organism>
<sequence length="1439" mass="165357">MAKEDIEEEREIRNDASENSSDEEGDDVLDSSEEDDDDDDEEAIKRVREGFIVDDDEDESQKRKRRKHKKRKREERTNDDENNALDQDDLELLMENSGARPQPSSNKLKRLKRAYTEDTEGAEEEEIGAKSGRGGLTDIFSDEDNNEEERADLGETRVDDDRNILDEFEDFIEEDEYSDEDEERQRKLTQQRERAQKKGPRLDTSKLSNVDRESLQQLFEVFGNGAEYEWALEAQEMEDEGNGENLEPTSLDEVFEHAELKERMLTEEDNLIRIVDIPERFQKYRANLNYIDLEGEELKSEQGWVANILFMEKQGSFSGFLEEPFKEAVSKVVEFISKDVYEVPFIWTHRRDFLLYSEEIKNEDGSVTNSVHKLLFEDDLWRIFQLDIEYHSLYEKRVNIEKLIESLNLDDDLVKDVKSLETMVAIQDLQDYINFTYSTEIRKLYDDKETEGIDANITKKHSKYAIFERIKSNVLYDAVNAFGISAKEFGENVQDQSSKKFEVPYRIHATDDHIESPEDLIERLCEDDEVLFKDPKNALNAVRKTFAEEIFHNPKIRHEVRTTFKDFASIRVAVTEKGKAIDNHSPYADIKYAINRSPADLVRNPDVLLRMLEAEAAGLVVVKVETKDYDSWFQCIFNCLKSDGSSEIFEKWNKEREFVLNMAFKRLTSMVSMNTKEDLRRECERLIASEVRRRFLARIDQAPFTPFGFDKGTKPNVLALSFGKGDFDSAVIGAFLRESGKVDEFFKSEDNPIRDRESEDKFSGQLKEFFDKNLRNQKPDVIVVSGYNAISKKLFDSVKSFVETNNVTANTEELTDVQNPPLIQVIWGQSETATLFQNSERARIEFSDKPTLAKYCVGLARYVQSPLLEYLSLGEGILSLTFFEHQKLISTDLVMEAIESAYVDIINMVGVEINEAIRDPYIAQLLPYVAGLGPRKASGLLRNINSKLGSTLANRSDLIENELSTANIFINCSSFLNIPYDEGLSMRDSSVELLDATRIHPEDYDLARKMAADALDLDEEDMAHVEEQGGIIYQLMQDGVNKVDDLNLTAYGKELESKFGKKKYATLQSIKEELVNNFEEIRRSFHILESHEVFHMLTGETTESFTRNTIVPVTVNKVGQNFRDFENSKIKFAKVTTSSFIQGNIEEASIPQGIDLAQGQVVQAVVLDAYYDSFTASFSLLEADIQKGAAPKFHKDPLKWNFEAEQADKQKEMAKERAQLAKTRNIQHPLFHNFSYKQAEEFLAPQAVGDCVLRPSSKGPNYLTVTWKVSNNLFQHLSIQENTQGMGKEYIVEHKKYADLDQLIFQHVQAIAKHVDEMCRHPKFREGTMSEVNEWLESYTKANPKNSAYVFCFDHKAPGWFLLLFKVNVNTPITTWHVKTECDGYRLKGFSYPSMLRLCNGFKQTFKSYVKGIADRSRSTKPAPVNNQAQASTYGGYGY</sequence>
<feature type="chain" id="PRO_0000238574" description="Transcription elongation factor SPT6">
    <location>
        <begin position="1"/>
        <end position="1439"/>
    </location>
</feature>
<feature type="domain" description="SH2" evidence="2">
    <location>
        <begin position="1229"/>
        <end position="1323"/>
    </location>
</feature>
<feature type="region of interest" description="Disordered" evidence="3">
    <location>
        <begin position="1"/>
        <end position="206"/>
    </location>
</feature>
<feature type="region of interest" description="Disordered" evidence="3">
    <location>
        <begin position="1417"/>
        <end position="1439"/>
    </location>
</feature>
<feature type="compositionally biased region" description="Basic and acidic residues" evidence="3">
    <location>
        <begin position="1"/>
        <end position="16"/>
    </location>
</feature>
<feature type="compositionally biased region" description="Acidic residues" evidence="3">
    <location>
        <begin position="20"/>
        <end position="42"/>
    </location>
</feature>
<feature type="compositionally biased region" description="Basic residues" evidence="3">
    <location>
        <begin position="62"/>
        <end position="73"/>
    </location>
</feature>
<feature type="compositionally biased region" description="Acidic residues" evidence="3">
    <location>
        <begin position="77"/>
        <end position="92"/>
    </location>
</feature>
<feature type="compositionally biased region" description="Acidic residues" evidence="3">
    <location>
        <begin position="117"/>
        <end position="126"/>
    </location>
</feature>
<feature type="compositionally biased region" description="Acidic residues" evidence="3">
    <location>
        <begin position="140"/>
        <end position="150"/>
    </location>
</feature>
<feature type="compositionally biased region" description="Basic and acidic residues" evidence="3">
    <location>
        <begin position="151"/>
        <end position="165"/>
    </location>
</feature>
<feature type="compositionally biased region" description="Acidic residues" evidence="3">
    <location>
        <begin position="166"/>
        <end position="182"/>
    </location>
</feature>
<feature type="compositionally biased region" description="Basic and acidic residues" evidence="3">
    <location>
        <begin position="183"/>
        <end position="206"/>
    </location>
</feature>
<accession>Q6BVE1</accession>
<dbReference type="EMBL" id="CR382135">
    <property type="protein sequence ID" value="CAG85873.1"/>
    <property type="molecule type" value="Genomic_DNA"/>
</dbReference>
<dbReference type="RefSeq" id="XP_457828.1">
    <property type="nucleotide sequence ID" value="XM_457828.1"/>
</dbReference>
<dbReference type="SMR" id="Q6BVE1"/>
<dbReference type="FunCoup" id="Q6BVE1">
    <property type="interactions" value="1282"/>
</dbReference>
<dbReference type="STRING" id="284592.Q6BVE1"/>
<dbReference type="GeneID" id="2900117"/>
<dbReference type="KEGG" id="dha:DEHA2C03344g"/>
<dbReference type="VEuPathDB" id="FungiDB:DEHA2C03344g"/>
<dbReference type="eggNOG" id="KOG1856">
    <property type="taxonomic scope" value="Eukaryota"/>
</dbReference>
<dbReference type="HOGENOM" id="CLU_001680_0_1_1"/>
<dbReference type="InParanoid" id="Q6BVE1"/>
<dbReference type="OMA" id="GYFYLCF"/>
<dbReference type="OrthoDB" id="995477at2759"/>
<dbReference type="Proteomes" id="UP000000599">
    <property type="component" value="Chromosome C"/>
</dbReference>
<dbReference type="GO" id="GO:0000791">
    <property type="term" value="C:euchromatin"/>
    <property type="evidence" value="ECO:0007669"/>
    <property type="project" value="EnsemblFungi"/>
</dbReference>
<dbReference type="GO" id="GO:0005721">
    <property type="term" value="C:pericentric heterochromatin"/>
    <property type="evidence" value="ECO:0007669"/>
    <property type="project" value="EnsemblFungi"/>
</dbReference>
<dbReference type="GO" id="GO:0008023">
    <property type="term" value="C:transcription elongation factor complex"/>
    <property type="evidence" value="ECO:0007669"/>
    <property type="project" value="TreeGrafter"/>
</dbReference>
<dbReference type="GO" id="GO:0003677">
    <property type="term" value="F:DNA binding"/>
    <property type="evidence" value="ECO:0007669"/>
    <property type="project" value="InterPro"/>
</dbReference>
<dbReference type="GO" id="GO:0042393">
    <property type="term" value="F:histone binding"/>
    <property type="evidence" value="ECO:0007669"/>
    <property type="project" value="EnsemblFungi"/>
</dbReference>
<dbReference type="GO" id="GO:0031491">
    <property type="term" value="F:nucleosome binding"/>
    <property type="evidence" value="ECO:0007669"/>
    <property type="project" value="EnsemblFungi"/>
</dbReference>
<dbReference type="GO" id="GO:0001073">
    <property type="term" value="F:transcription antitermination factor activity, DNA binding"/>
    <property type="evidence" value="ECO:0007669"/>
    <property type="project" value="EnsemblFungi"/>
</dbReference>
<dbReference type="GO" id="GO:0033554">
    <property type="term" value="P:cellular response to stress"/>
    <property type="evidence" value="ECO:0007669"/>
    <property type="project" value="EnsemblFungi"/>
</dbReference>
<dbReference type="GO" id="GO:0000082">
    <property type="term" value="P:G1/S transition of mitotic cell cycle"/>
    <property type="evidence" value="ECO:0007669"/>
    <property type="project" value="EnsemblFungi"/>
</dbReference>
<dbReference type="GO" id="GO:0000122">
    <property type="term" value="P:negative regulation of transcription by RNA polymerase II"/>
    <property type="evidence" value="ECO:0007669"/>
    <property type="project" value="EnsemblFungi"/>
</dbReference>
<dbReference type="GO" id="GO:0006334">
    <property type="term" value="P:nucleosome assembly"/>
    <property type="evidence" value="ECO:0007669"/>
    <property type="project" value="EnsemblFungi"/>
</dbReference>
<dbReference type="GO" id="GO:0016973">
    <property type="term" value="P:poly(A)+ mRNA export from nucleus"/>
    <property type="evidence" value="ECO:0007669"/>
    <property type="project" value="EnsemblFungi"/>
</dbReference>
<dbReference type="GO" id="GO:0032968">
    <property type="term" value="P:positive regulation of transcription elongation by RNA polymerase II"/>
    <property type="evidence" value="ECO:0007669"/>
    <property type="project" value="EnsemblFungi"/>
</dbReference>
<dbReference type="GO" id="GO:0031440">
    <property type="term" value="P:regulation of mRNA 3'-end processing"/>
    <property type="evidence" value="ECO:0007669"/>
    <property type="project" value="EnsemblFungi"/>
</dbReference>
<dbReference type="GO" id="GO:0140673">
    <property type="term" value="P:transcription elongation-coupled chromatin remodeling"/>
    <property type="evidence" value="ECO:0007669"/>
    <property type="project" value="EnsemblFungi"/>
</dbReference>
<dbReference type="CDD" id="cd09928">
    <property type="entry name" value="SH2_Cterm_SPT6_like"/>
    <property type="match status" value="1"/>
</dbReference>
<dbReference type="CDD" id="cd09918">
    <property type="entry name" value="SH2_Nterm_SPT6_like"/>
    <property type="match status" value="1"/>
</dbReference>
<dbReference type="FunFam" id="1.10.10.2740:FF:000002">
    <property type="entry name" value="Transcription elongation factor Spt6"/>
    <property type="match status" value="1"/>
</dbReference>
<dbReference type="FunFam" id="3.30.505.10:FF:000056">
    <property type="entry name" value="Transcription elongation factor Spt6"/>
    <property type="match status" value="1"/>
</dbReference>
<dbReference type="Gene3D" id="1.10.10.650">
    <property type="entry name" value="RuvA domain 2-like"/>
    <property type="match status" value="1"/>
</dbReference>
<dbReference type="Gene3D" id="3.30.505.10">
    <property type="entry name" value="SH2 domain"/>
    <property type="match status" value="2"/>
</dbReference>
<dbReference type="Gene3D" id="1.10.10.2740">
    <property type="entry name" value="Spt6, Death-like domain"/>
    <property type="match status" value="1"/>
</dbReference>
<dbReference type="Gene3D" id="1.10.150.850">
    <property type="entry name" value="Spt6, helix-hairpin-helix domain"/>
    <property type="match status" value="1"/>
</dbReference>
<dbReference type="Gene3D" id="1.10.3500.10">
    <property type="entry name" value="Tex N-terminal region-like"/>
    <property type="match status" value="1"/>
</dbReference>
<dbReference type="Gene3D" id="3.30.420.140">
    <property type="entry name" value="YqgF/RNase H-like domain"/>
    <property type="match status" value="1"/>
</dbReference>
<dbReference type="InterPro" id="IPR041692">
    <property type="entry name" value="HHH_9"/>
</dbReference>
<dbReference type="InterPro" id="IPR012337">
    <property type="entry name" value="RNaseH-like_sf"/>
</dbReference>
<dbReference type="InterPro" id="IPR010994">
    <property type="entry name" value="RuvA_2-like"/>
</dbReference>
<dbReference type="InterPro" id="IPR000980">
    <property type="entry name" value="SH2"/>
</dbReference>
<dbReference type="InterPro" id="IPR036860">
    <property type="entry name" value="SH2_dom_sf"/>
</dbReference>
<dbReference type="InterPro" id="IPR049540">
    <property type="entry name" value="Spt6-like_S1"/>
</dbReference>
<dbReference type="InterPro" id="IPR028083">
    <property type="entry name" value="Spt6_acidic_N_dom"/>
</dbReference>
<dbReference type="InterPro" id="IPR042066">
    <property type="entry name" value="Spt6_death-like"/>
</dbReference>
<dbReference type="InterPro" id="IPR032706">
    <property type="entry name" value="Spt6_HHH"/>
</dbReference>
<dbReference type="InterPro" id="IPR028088">
    <property type="entry name" value="Spt6_HTH_DNA-bd_dom"/>
</dbReference>
<dbReference type="InterPro" id="IPR035420">
    <property type="entry name" value="Spt6_SH2"/>
</dbReference>
<dbReference type="InterPro" id="IPR035018">
    <property type="entry name" value="Spt6_SH2_C"/>
</dbReference>
<dbReference type="InterPro" id="IPR035019">
    <property type="entry name" value="Spt6_SH2_N"/>
</dbReference>
<dbReference type="InterPro" id="IPR028231">
    <property type="entry name" value="Spt6_YqgF"/>
</dbReference>
<dbReference type="InterPro" id="IPR055179">
    <property type="entry name" value="Tex-like_central_region"/>
</dbReference>
<dbReference type="InterPro" id="IPR023323">
    <property type="entry name" value="Tex-like_dom_sf"/>
</dbReference>
<dbReference type="InterPro" id="IPR023319">
    <property type="entry name" value="Tex-like_HTH_dom_sf"/>
</dbReference>
<dbReference type="InterPro" id="IPR017072">
    <property type="entry name" value="TF_Spt6"/>
</dbReference>
<dbReference type="InterPro" id="IPR037027">
    <property type="entry name" value="YqgF/RNaseH-like_dom_sf"/>
</dbReference>
<dbReference type="PANTHER" id="PTHR10145">
    <property type="entry name" value="TRANSCRIPTION ELONGATION FACTOR SPT6"/>
    <property type="match status" value="1"/>
</dbReference>
<dbReference type="PANTHER" id="PTHR10145:SF6">
    <property type="entry name" value="TRANSCRIPTION ELONGATION FACTOR SPT6"/>
    <property type="match status" value="1"/>
</dbReference>
<dbReference type="Pfam" id="PF14635">
    <property type="entry name" value="HHH_7"/>
    <property type="match status" value="1"/>
</dbReference>
<dbReference type="Pfam" id="PF17674">
    <property type="entry name" value="HHH_9"/>
    <property type="match status" value="1"/>
</dbReference>
<dbReference type="Pfam" id="PF14641">
    <property type="entry name" value="HTH_44"/>
    <property type="match status" value="1"/>
</dbReference>
<dbReference type="Pfam" id="PF14633">
    <property type="entry name" value="SH2_2"/>
    <property type="match status" value="1"/>
</dbReference>
<dbReference type="Pfam" id="PF14632">
    <property type="entry name" value="SPT6_acidic"/>
    <property type="match status" value="1"/>
</dbReference>
<dbReference type="Pfam" id="PF21710">
    <property type="entry name" value="Spt6_S1"/>
    <property type="match status" value="1"/>
</dbReference>
<dbReference type="Pfam" id="PF22706">
    <property type="entry name" value="Tex_central_region"/>
    <property type="match status" value="1"/>
</dbReference>
<dbReference type="Pfam" id="PF14639">
    <property type="entry name" value="YqgF"/>
    <property type="match status" value="1"/>
</dbReference>
<dbReference type="PIRSF" id="PIRSF036947">
    <property type="entry name" value="Spt6"/>
    <property type="match status" value="1"/>
</dbReference>
<dbReference type="SMART" id="SM00252">
    <property type="entry name" value="SH2"/>
    <property type="match status" value="1"/>
</dbReference>
<dbReference type="SUPFAM" id="SSF53098">
    <property type="entry name" value="Ribonuclease H-like"/>
    <property type="match status" value="1"/>
</dbReference>
<dbReference type="SUPFAM" id="SSF47781">
    <property type="entry name" value="RuvA domain 2-like"/>
    <property type="match status" value="2"/>
</dbReference>
<dbReference type="SUPFAM" id="SSF55550">
    <property type="entry name" value="SH2 domain"/>
    <property type="match status" value="1"/>
</dbReference>
<dbReference type="SUPFAM" id="SSF158832">
    <property type="entry name" value="Tex N-terminal region-like"/>
    <property type="match status" value="1"/>
</dbReference>
<dbReference type="PROSITE" id="PS50001">
    <property type="entry name" value="SH2"/>
    <property type="match status" value="1"/>
</dbReference>
<comment type="function">
    <text evidence="1">Histone H3-H4 chaperone that plays a role in maintenance of chromatin structure during RNA polymerase II transcription elongation thereby repressing transcription initiation from cryptic promoters. Mediates the reassembly of nucleosomes onto the promoters of at least a selected set of genes during repression; the nucleosome reassembly is essential for transcriptional repression. Essential for viability.</text>
</comment>
<comment type="subcellular location">
    <subcellularLocation>
        <location evidence="1">Nucleus</location>
    </subcellularLocation>
    <subcellularLocation>
        <location evidence="1">Chromosome</location>
    </subcellularLocation>
</comment>
<comment type="similarity">
    <text evidence="4">Belongs to the SPT6 family.</text>
</comment>
<keyword id="KW-0158">Chromosome</keyword>
<keyword id="KW-0539">Nucleus</keyword>
<keyword id="KW-1185">Reference proteome</keyword>
<keyword id="KW-0727">SH2 domain</keyword>
<keyword id="KW-0804">Transcription</keyword>
<gene>
    <name type="primary">SPT6</name>
    <name type="ordered locus">DEHA2C03344g</name>
</gene>
<evidence type="ECO:0000250" key="1">
    <source>
        <dbReference type="UniProtKB" id="P23615"/>
    </source>
</evidence>
<evidence type="ECO:0000255" key="2">
    <source>
        <dbReference type="PROSITE-ProRule" id="PRU00191"/>
    </source>
</evidence>
<evidence type="ECO:0000256" key="3">
    <source>
        <dbReference type="SAM" id="MobiDB-lite"/>
    </source>
</evidence>
<evidence type="ECO:0000305" key="4"/>
<name>SPT6_DEBHA</name>
<protein>
    <recommendedName>
        <fullName>Transcription elongation factor SPT6</fullName>
    </recommendedName>
    <alternativeName>
        <fullName>Chromatin elongation factor SPT6</fullName>
    </alternativeName>
</protein>